<name>RNY_STRSV</name>
<reference key="1">
    <citation type="journal article" date="2007" name="J. Bacteriol.">
        <title>Genome of the opportunistic pathogen Streptococcus sanguinis.</title>
        <authorList>
            <person name="Xu P."/>
            <person name="Alves J.M."/>
            <person name="Kitten T."/>
            <person name="Brown A."/>
            <person name="Chen Z."/>
            <person name="Ozaki L.S."/>
            <person name="Manque P."/>
            <person name="Ge X."/>
            <person name="Serrano M.G."/>
            <person name="Puiu D."/>
            <person name="Hendricks S."/>
            <person name="Wang Y."/>
            <person name="Chaplin M.D."/>
            <person name="Akan D."/>
            <person name="Paik S."/>
            <person name="Peterson D.L."/>
            <person name="Macrina F.L."/>
            <person name="Buck G.A."/>
        </authorList>
    </citation>
    <scope>NUCLEOTIDE SEQUENCE [LARGE SCALE GENOMIC DNA]</scope>
    <source>
        <strain>SK36</strain>
    </source>
</reference>
<accession>A3CPX8</accession>
<sequence>MDLFPIIMSVFAAIIGLVIGYVSVSAKMKSSKEAAELTLLNAEQEATNLRGQAEREADLIVKEAKRETSSLKKEALLEAKEEARKYREQVDAEFKSERQELKQIESRLTERASTLDRKDDNLSNKEKALEQKEQSLSDKSKHIDAREEQVAELEKQKAAELERVASLSQTEARDIILTQTEDKLSKEIATRIRDAEQDIKERSDKVAKNILVQAMQRIAGDYVAEQTNSTVHLPDDSMKGRIIGREGRNIRTFESLTGIDVIIDDTPEVVTLSGFDPIRREIARMTMEALLKDGRIHPARIEELVEKNRLEIDNRIREYGEAAAYEIGAPNLHPDLMKIMGRLQFRTSYGQNVLRHSIEVAKLSGIIAAELGENANLARRAGFLHDIGKSIDREVEGSHVEIGTELARKYKEHPVVVNTIASHHGDVEAESVIAVIVAAADALSAARPGARSESLESYIKRLQDLEEIANSFKGVKNSFALQAGREIRIMVQPDKIKDDKITILAHDVREKIENNLEYPGNIKVTVIREMRAVDYAK</sequence>
<organism>
    <name type="scientific">Streptococcus sanguinis (strain SK36)</name>
    <dbReference type="NCBI Taxonomy" id="388919"/>
    <lineage>
        <taxon>Bacteria</taxon>
        <taxon>Bacillati</taxon>
        <taxon>Bacillota</taxon>
        <taxon>Bacilli</taxon>
        <taxon>Lactobacillales</taxon>
        <taxon>Streptococcaceae</taxon>
        <taxon>Streptococcus</taxon>
    </lineage>
</organism>
<evidence type="ECO:0000255" key="1">
    <source>
        <dbReference type="HAMAP-Rule" id="MF_00335"/>
    </source>
</evidence>
<evidence type="ECO:0000255" key="2">
    <source>
        <dbReference type="PROSITE-ProRule" id="PRU01175"/>
    </source>
</evidence>
<evidence type="ECO:0000256" key="3">
    <source>
        <dbReference type="SAM" id="MobiDB-lite"/>
    </source>
</evidence>
<keyword id="KW-1003">Cell membrane</keyword>
<keyword id="KW-0255">Endonuclease</keyword>
<keyword id="KW-0378">Hydrolase</keyword>
<keyword id="KW-0472">Membrane</keyword>
<keyword id="KW-0540">Nuclease</keyword>
<keyword id="KW-1185">Reference proteome</keyword>
<keyword id="KW-0694">RNA-binding</keyword>
<keyword id="KW-0812">Transmembrane</keyword>
<keyword id="KW-1133">Transmembrane helix</keyword>
<comment type="function">
    <text evidence="1">Endoribonuclease that initiates mRNA decay.</text>
</comment>
<comment type="subcellular location">
    <subcellularLocation>
        <location evidence="1">Cell membrane</location>
        <topology evidence="1">Single-pass membrane protein</topology>
    </subcellularLocation>
</comment>
<comment type="similarity">
    <text evidence="1">Belongs to the RNase Y family.</text>
</comment>
<gene>
    <name evidence="1" type="primary">rny</name>
    <name type="ordered locus">SSA_1852</name>
</gene>
<proteinExistence type="inferred from homology"/>
<dbReference type="EC" id="3.1.-.-" evidence="1"/>
<dbReference type="EMBL" id="CP000387">
    <property type="protein sequence ID" value="ABN45233.1"/>
    <property type="molecule type" value="Genomic_DNA"/>
</dbReference>
<dbReference type="RefSeq" id="WP_002893506.1">
    <property type="nucleotide sequence ID" value="NC_009009.1"/>
</dbReference>
<dbReference type="RefSeq" id="YP_001035783.1">
    <property type="nucleotide sequence ID" value="NC_009009.1"/>
</dbReference>
<dbReference type="SMR" id="A3CPX8"/>
<dbReference type="STRING" id="388919.SSA_1852"/>
<dbReference type="KEGG" id="ssa:SSA_1852"/>
<dbReference type="PATRIC" id="fig|388919.9.peg.1757"/>
<dbReference type="eggNOG" id="COG1418">
    <property type="taxonomic scope" value="Bacteria"/>
</dbReference>
<dbReference type="HOGENOM" id="CLU_028328_1_0_9"/>
<dbReference type="OrthoDB" id="9803205at2"/>
<dbReference type="Proteomes" id="UP000002148">
    <property type="component" value="Chromosome"/>
</dbReference>
<dbReference type="GO" id="GO:0005886">
    <property type="term" value="C:plasma membrane"/>
    <property type="evidence" value="ECO:0007669"/>
    <property type="project" value="UniProtKB-SubCell"/>
</dbReference>
<dbReference type="GO" id="GO:0003723">
    <property type="term" value="F:RNA binding"/>
    <property type="evidence" value="ECO:0007669"/>
    <property type="project" value="UniProtKB-UniRule"/>
</dbReference>
<dbReference type="GO" id="GO:0004521">
    <property type="term" value="F:RNA endonuclease activity"/>
    <property type="evidence" value="ECO:0007669"/>
    <property type="project" value="UniProtKB-UniRule"/>
</dbReference>
<dbReference type="GO" id="GO:0006402">
    <property type="term" value="P:mRNA catabolic process"/>
    <property type="evidence" value="ECO:0007669"/>
    <property type="project" value="UniProtKB-UniRule"/>
</dbReference>
<dbReference type="CDD" id="cd00077">
    <property type="entry name" value="HDc"/>
    <property type="match status" value="1"/>
</dbReference>
<dbReference type="CDD" id="cd22431">
    <property type="entry name" value="KH-I_RNaseY"/>
    <property type="match status" value="1"/>
</dbReference>
<dbReference type="FunFam" id="1.10.3210.10:FF:000003">
    <property type="entry name" value="Ribonuclease Y"/>
    <property type="match status" value="1"/>
</dbReference>
<dbReference type="Gene3D" id="1.10.3210.10">
    <property type="entry name" value="Hypothetical protein af1432"/>
    <property type="match status" value="1"/>
</dbReference>
<dbReference type="Gene3D" id="3.30.1370.10">
    <property type="entry name" value="K Homology domain, type 1"/>
    <property type="match status" value="1"/>
</dbReference>
<dbReference type="HAMAP" id="MF_00335">
    <property type="entry name" value="RNase_Y"/>
    <property type="match status" value="1"/>
</dbReference>
<dbReference type="InterPro" id="IPR003607">
    <property type="entry name" value="HD/PDEase_dom"/>
</dbReference>
<dbReference type="InterPro" id="IPR006674">
    <property type="entry name" value="HD_domain"/>
</dbReference>
<dbReference type="InterPro" id="IPR006675">
    <property type="entry name" value="HDIG_dom"/>
</dbReference>
<dbReference type="InterPro" id="IPR004087">
    <property type="entry name" value="KH_dom"/>
</dbReference>
<dbReference type="InterPro" id="IPR004088">
    <property type="entry name" value="KH_dom_type_1"/>
</dbReference>
<dbReference type="InterPro" id="IPR036612">
    <property type="entry name" value="KH_dom_type_1_sf"/>
</dbReference>
<dbReference type="InterPro" id="IPR017705">
    <property type="entry name" value="Ribonuclease_Y"/>
</dbReference>
<dbReference type="InterPro" id="IPR022711">
    <property type="entry name" value="RNase_Y_N"/>
</dbReference>
<dbReference type="NCBIfam" id="TIGR00277">
    <property type="entry name" value="HDIG"/>
    <property type="match status" value="1"/>
</dbReference>
<dbReference type="NCBIfam" id="NF000997">
    <property type="entry name" value="PRK00106.1"/>
    <property type="match status" value="1"/>
</dbReference>
<dbReference type="NCBIfam" id="TIGR03319">
    <property type="entry name" value="RNase_Y"/>
    <property type="match status" value="1"/>
</dbReference>
<dbReference type="PANTHER" id="PTHR12826">
    <property type="entry name" value="RIBONUCLEASE Y"/>
    <property type="match status" value="1"/>
</dbReference>
<dbReference type="PANTHER" id="PTHR12826:SF15">
    <property type="entry name" value="RIBONUCLEASE Y"/>
    <property type="match status" value="1"/>
</dbReference>
<dbReference type="Pfam" id="PF01966">
    <property type="entry name" value="HD"/>
    <property type="match status" value="1"/>
</dbReference>
<dbReference type="Pfam" id="PF00013">
    <property type="entry name" value="KH_1"/>
    <property type="match status" value="1"/>
</dbReference>
<dbReference type="Pfam" id="PF12072">
    <property type="entry name" value="RNase_Y_N"/>
    <property type="match status" value="1"/>
</dbReference>
<dbReference type="SMART" id="SM00471">
    <property type="entry name" value="HDc"/>
    <property type="match status" value="1"/>
</dbReference>
<dbReference type="SMART" id="SM00322">
    <property type="entry name" value="KH"/>
    <property type="match status" value="1"/>
</dbReference>
<dbReference type="SUPFAM" id="SSF54791">
    <property type="entry name" value="Eukaryotic type KH-domain (KH-domain type I)"/>
    <property type="match status" value="1"/>
</dbReference>
<dbReference type="SUPFAM" id="SSF109604">
    <property type="entry name" value="HD-domain/PDEase-like"/>
    <property type="match status" value="1"/>
</dbReference>
<dbReference type="PROSITE" id="PS51831">
    <property type="entry name" value="HD"/>
    <property type="match status" value="1"/>
</dbReference>
<dbReference type="PROSITE" id="PS50084">
    <property type="entry name" value="KH_TYPE_1"/>
    <property type="match status" value="1"/>
</dbReference>
<feature type="chain" id="PRO_0000344949" description="Ribonuclease Y">
    <location>
        <begin position="1"/>
        <end position="537"/>
    </location>
</feature>
<feature type="transmembrane region" description="Helical" evidence="1">
    <location>
        <begin position="4"/>
        <end position="24"/>
    </location>
</feature>
<feature type="domain" description="KH" evidence="1">
    <location>
        <begin position="227"/>
        <end position="287"/>
    </location>
</feature>
<feature type="domain" description="HD" evidence="2">
    <location>
        <begin position="353"/>
        <end position="446"/>
    </location>
</feature>
<feature type="region of interest" description="Disordered" evidence="3">
    <location>
        <begin position="112"/>
        <end position="148"/>
    </location>
</feature>
<protein>
    <recommendedName>
        <fullName evidence="1">Ribonuclease Y</fullName>
        <shortName evidence="1">RNase Y</shortName>
        <ecNumber evidence="1">3.1.-.-</ecNumber>
    </recommendedName>
</protein>